<dbReference type="EC" id="2.7.7.23" evidence="1"/>
<dbReference type="EC" id="2.3.1.157" evidence="1"/>
<dbReference type="EMBL" id="AE016825">
    <property type="protein sequence ID" value="AAQ58350.1"/>
    <property type="molecule type" value="Genomic_DNA"/>
</dbReference>
<dbReference type="RefSeq" id="WP_011134229.1">
    <property type="nucleotide sequence ID" value="NC_005085.1"/>
</dbReference>
<dbReference type="SMR" id="Q7MBG1"/>
<dbReference type="STRING" id="243365.CV_0674"/>
<dbReference type="KEGG" id="cvi:CV_0674"/>
<dbReference type="eggNOG" id="COG1207">
    <property type="taxonomic scope" value="Bacteria"/>
</dbReference>
<dbReference type="HOGENOM" id="CLU_029499_15_2_4"/>
<dbReference type="OrthoDB" id="9775031at2"/>
<dbReference type="UniPathway" id="UPA00113">
    <property type="reaction ID" value="UER00532"/>
</dbReference>
<dbReference type="UniPathway" id="UPA00113">
    <property type="reaction ID" value="UER00533"/>
</dbReference>
<dbReference type="UniPathway" id="UPA00973"/>
<dbReference type="Proteomes" id="UP000001424">
    <property type="component" value="Chromosome"/>
</dbReference>
<dbReference type="GO" id="GO:0005737">
    <property type="term" value="C:cytoplasm"/>
    <property type="evidence" value="ECO:0007669"/>
    <property type="project" value="UniProtKB-SubCell"/>
</dbReference>
<dbReference type="GO" id="GO:0016020">
    <property type="term" value="C:membrane"/>
    <property type="evidence" value="ECO:0007669"/>
    <property type="project" value="GOC"/>
</dbReference>
<dbReference type="GO" id="GO:0019134">
    <property type="term" value="F:glucosamine-1-phosphate N-acetyltransferase activity"/>
    <property type="evidence" value="ECO:0007669"/>
    <property type="project" value="UniProtKB-UniRule"/>
</dbReference>
<dbReference type="GO" id="GO:0000287">
    <property type="term" value="F:magnesium ion binding"/>
    <property type="evidence" value="ECO:0007669"/>
    <property type="project" value="UniProtKB-UniRule"/>
</dbReference>
<dbReference type="GO" id="GO:0003977">
    <property type="term" value="F:UDP-N-acetylglucosamine diphosphorylase activity"/>
    <property type="evidence" value="ECO:0007669"/>
    <property type="project" value="UniProtKB-UniRule"/>
</dbReference>
<dbReference type="GO" id="GO:0000902">
    <property type="term" value="P:cell morphogenesis"/>
    <property type="evidence" value="ECO:0007669"/>
    <property type="project" value="UniProtKB-UniRule"/>
</dbReference>
<dbReference type="GO" id="GO:0071555">
    <property type="term" value="P:cell wall organization"/>
    <property type="evidence" value="ECO:0007669"/>
    <property type="project" value="UniProtKB-KW"/>
</dbReference>
<dbReference type="GO" id="GO:0009245">
    <property type="term" value="P:lipid A biosynthetic process"/>
    <property type="evidence" value="ECO:0007669"/>
    <property type="project" value="UniProtKB-UniRule"/>
</dbReference>
<dbReference type="GO" id="GO:0009252">
    <property type="term" value="P:peptidoglycan biosynthetic process"/>
    <property type="evidence" value="ECO:0007669"/>
    <property type="project" value="UniProtKB-UniRule"/>
</dbReference>
<dbReference type="GO" id="GO:0008360">
    <property type="term" value="P:regulation of cell shape"/>
    <property type="evidence" value="ECO:0007669"/>
    <property type="project" value="UniProtKB-KW"/>
</dbReference>
<dbReference type="GO" id="GO:0006048">
    <property type="term" value="P:UDP-N-acetylglucosamine biosynthetic process"/>
    <property type="evidence" value="ECO:0007669"/>
    <property type="project" value="UniProtKB-UniPathway"/>
</dbReference>
<dbReference type="CDD" id="cd02540">
    <property type="entry name" value="GT2_GlmU_N_bac"/>
    <property type="match status" value="1"/>
</dbReference>
<dbReference type="CDD" id="cd03353">
    <property type="entry name" value="LbH_GlmU_C"/>
    <property type="match status" value="1"/>
</dbReference>
<dbReference type="Gene3D" id="2.160.10.10">
    <property type="entry name" value="Hexapeptide repeat proteins"/>
    <property type="match status" value="1"/>
</dbReference>
<dbReference type="Gene3D" id="3.90.550.10">
    <property type="entry name" value="Spore Coat Polysaccharide Biosynthesis Protein SpsA, Chain A"/>
    <property type="match status" value="1"/>
</dbReference>
<dbReference type="HAMAP" id="MF_01631">
    <property type="entry name" value="GlmU"/>
    <property type="match status" value="1"/>
</dbReference>
<dbReference type="InterPro" id="IPR005882">
    <property type="entry name" value="Bifunctional_GlmU"/>
</dbReference>
<dbReference type="InterPro" id="IPR050065">
    <property type="entry name" value="GlmU-like"/>
</dbReference>
<dbReference type="InterPro" id="IPR038009">
    <property type="entry name" value="GlmU_C_LbH"/>
</dbReference>
<dbReference type="InterPro" id="IPR001451">
    <property type="entry name" value="Hexapep"/>
</dbReference>
<dbReference type="InterPro" id="IPR025877">
    <property type="entry name" value="MobA-like_NTP_Trfase"/>
</dbReference>
<dbReference type="InterPro" id="IPR029044">
    <property type="entry name" value="Nucleotide-diphossugar_trans"/>
</dbReference>
<dbReference type="InterPro" id="IPR011004">
    <property type="entry name" value="Trimer_LpxA-like_sf"/>
</dbReference>
<dbReference type="NCBIfam" id="TIGR01173">
    <property type="entry name" value="glmU"/>
    <property type="match status" value="1"/>
</dbReference>
<dbReference type="PANTHER" id="PTHR43584:SF3">
    <property type="entry name" value="BIFUNCTIONAL PROTEIN GLMU"/>
    <property type="match status" value="1"/>
</dbReference>
<dbReference type="PANTHER" id="PTHR43584">
    <property type="entry name" value="NUCLEOTIDYL TRANSFERASE"/>
    <property type="match status" value="1"/>
</dbReference>
<dbReference type="Pfam" id="PF14602">
    <property type="entry name" value="Hexapep_2"/>
    <property type="match status" value="1"/>
</dbReference>
<dbReference type="Pfam" id="PF12804">
    <property type="entry name" value="NTP_transf_3"/>
    <property type="match status" value="1"/>
</dbReference>
<dbReference type="SUPFAM" id="SSF53448">
    <property type="entry name" value="Nucleotide-diphospho-sugar transferases"/>
    <property type="match status" value="1"/>
</dbReference>
<dbReference type="SUPFAM" id="SSF51161">
    <property type="entry name" value="Trimeric LpxA-like enzymes"/>
    <property type="match status" value="1"/>
</dbReference>
<evidence type="ECO:0000255" key="1">
    <source>
        <dbReference type="HAMAP-Rule" id="MF_01631"/>
    </source>
</evidence>
<gene>
    <name evidence="1" type="primary">glmU</name>
    <name type="ordered locus">CV_0674</name>
</gene>
<sequence length="455" mass="48126">MDSLSIVILAAGKGKRMYSSLPKVLHPIGGEPMLARVIRTARALNPSRLVVVYGHGGEQVRARIQDADIVWAEQAEQLGTGHALKMALPHLPQDGKTLVLYGDVPLTKASTLQRLEQAAAGGMAVLTDVLADASGYGRMVRGADGKLQAIVEHKDCTPEQLAIREINTGMMALPNARLADWLSALNNGNAQGEYYLTDVLELAVKDGVAVESASVDASWEAAGVNNKVQLAELERILQANQARALLEAGVTLADPARIDIRGELKHGMDVSIDIGCVFEGAVELGDQVEIGAHCVLKNVKIASGTRIAPFSHLEDAVVGAECRIGPYARLRPGAELAGHVHIGNFVEVKKSKIGEGSKVNHLSYVGDAEIGRKVNVGAGSVTCNYDGVNKFKTIIGDNVFVGSGTLMVAPVKLERDSTIGAGSVISKDTPAGELTVARARQVTVPGWKRPQKKSG</sequence>
<protein>
    <recommendedName>
        <fullName evidence="1">Bifunctional protein GlmU</fullName>
    </recommendedName>
    <domain>
        <recommendedName>
            <fullName evidence="1">UDP-N-acetylglucosamine pyrophosphorylase</fullName>
            <ecNumber evidence="1">2.7.7.23</ecNumber>
        </recommendedName>
        <alternativeName>
            <fullName evidence="1">N-acetylglucosamine-1-phosphate uridyltransferase</fullName>
        </alternativeName>
    </domain>
    <domain>
        <recommendedName>
            <fullName evidence="1">Glucosamine-1-phosphate N-acetyltransferase</fullName>
            <ecNumber evidence="1">2.3.1.157</ecNumber>
        </recommendedName>
    </domain>
</protein>
<accession>Q7MBG1</accession>
<keyword id="KW-0012">Acyltransferase</keyword>
<keyword id="KW-0133">Cell shape</keyword>
<keyword id="KW-0961">Cell wall biogenesis/degradation</keyword>
<keyword id="KW-0963">Cytoplasm</keyword>
<keyword id="KW-0460">Magnesium</keyword>
<keyword id="KW-0479">Metal-binding</keyword>
<keyword id="KW-0511">Multifunctional enzyme</keyword>
<keyword id="KW-0548">Nucleotidyltransferase</keyword>
<keyword id="KW-0573">Peptidoglycan synthesis</keyword>
<keyword id="KW-1185">Reference proteome</keyword>
<keyword id="KW-0677">Repeat</keyword>
<keyword id="KW-0808">Transferase</keyword>
<feature type="chain" id="PRO_0000233755" description="Bifunctional protein GlmU">
    <location>
        <begin position="1"/>
        <end position="455"/>
    </location>
</feature>
<feature type="region of interest" description="Pyrophosphorylase" evidence="1">
    <location>
        <begin position="1"/>
        <end position="227"/>
    </location>
</feature>
<feature type="region of interest" description="Linker" evidence="1">
    <location>
        <begin position="228"/>
        <end position="248"/>
    </location>
</feature>
<feature type="region of interest" description="N-acetyltransferase" evidence="1">
    <location>
        <begin position="249"/>
        <end position="455"/>
    </location>
</feature>
<feature type="active site" description="Proton acceptor" evidence="1">
    <location>
        <position position="361"/>
    </location>
</feature>
<feature type="binding site" evidence="1">
    <location>
        <begin position="9"/>
        <end position="12"/>
    </location>
    <ligand>
        <name>UDP-N-acetyl-alpha-D-glucosamine</name>
        <dbReference type="ChEBI" id="CHEBI:57705"/>
    </ligand>
</feature>
<feature type="binding site" evidence="1">
    <location>
        <position position="23"/>
    </location>
    <ligand>
        <name>UDP-N-acetyl-alpha-D-glucosamine</name>
        <dbReference type="ChEBI" id="CHEBI:57705"/>
    </ligand>
</feature>
<feature type="binding site" evidence="1">
    <location>
        <position position="74"/>
    </location>
    <ligand>
        <name>UDP-N-acetyl-alpha-D-glucosamine</name>
        <dbReference type="ChEBI" id="CHEBI:57705"/>
    </ligand>
</feature>
<feature type="binding site" evidence="1">
    <location>
        <begin position="79"/>
        <end position="80"/>
    </location>
    <ligand>
        <name>UDP-N-acetyl-alpha-D-glucosamine</name>
        <dbReference type="ChEBI" id="CHEBI:57705"/>
    </ligand>
</feature>
<feature type="binding site" evidence="1">
    <location>
        <begin position="101"/>
        <end position="103"/>
    </location>
    <ligand>
        <name>UDP-N-acetyl-alpha-D-glucosamine</name>
        <dbReference type="ChEBI" id="CHEBI:57705"/>
    </ligand>
</feature>
<feature type="binding site" evidence="1">
    <location>
        <position position="103"/>
    </location>
    <ligand>
        <name>Mg(2+)</name>
        <dbReference type="ChEBI" id="CHEBI:18420"/>
    </ligand>
</feature>
<feature type="binding site" evidence="1">
    <location>
        <position position="137"/>
    </location>
    <ligand>
        <name>UDP-N-acetyl-alpha-D-glucosamine</name>
        <dbReference type="ChEBI" id="CHEBI:57705"/>
    </ligand>
</feature>
<feature type="binding site" evidence="1">
    <location>
        <position position="152"/>
    </location>
    <ligand>
        <name>UDP-N-acetyl-alpha-D-glucosamine</name>
        <dbReference type="ChEBI" id="CHEBI:57705"/>
    </ligand>
</feature>
<feature type="binding site" evidence="1">
    <location>
        <position position="167"/>
    </location>
    <ligand>
        <name>UDP-N-acetyl-alpha-D-glucosamine</name>
        <dbReference type="ChEBI" id="CHEBI:57705"/>
    </ligand>
</feature>
<feature type="binding site" evidence="1">
    <location>
        <position position="225"/>
    </location>
    <ligand>
        <name>Mg(2+)</name>
        <dbReference type="ChEBI" id="CHEBI:18420"/>
    </ligand>
</feature>
<feature type="binding site" evidence="1">
    <location>
        <position position="225"/>
    </location>
    <ligand>
        <name>UDP-N-acetyl-alpha-D-glucosamine</name>
        <dbReference type="ChEBI" id="CHEBI:57705"/>
    </ligand>
</feature>
<feature type="binding site" evidence="1">
    <location>
        <position position="331"/>
    </location>
    <ligand>
        <name>UDP-N-acetyl-alpha-D-glucosamine</name>
        <dbReference type="ChEBI" id="CHEBI:57705"/>
    </ligand>
</feature>
<feature type="binding site" evidence="1">
    <location>
        <position position="349"/>
    </location>
    <ligand>
        <name>UDP-N-acetyl-alpha-D-glucosamine</name>
        <dbReference type="ChEBI" id="CHEBI:57705"/>
    </ligand>
</feature>
<feature type="binding site" evidence="1">
    <location>
        <position position="364"/>
    </location>
    <ligand>
        <name>UDP-N-acetyl-alpha-D-glucosamine</name>
        <dbReference type="ChEBI" id="CHEBI:57705"/>
    </ligand>
</feature>
<feature type="binding site" evidence="1">
    <location>
        <position position="375"/>
    </location>
    <ligand>
        <name>UDP-N-acetyl-alpha-D-glucosamine</name>
        <dbReference type="ChEBI" id="CHEBI:57705"/>
    </ligand>
</feature>
<feature type="binding site" evidence="1">
    <location>
        <position position="378"/>
    </location>
    <ligand>
        <name>acetyl-CoA</name>
        <dbReference type="ChEBI" id="CHEBI:57288"/>
    </ligand>
</feature>
<feature type="binding site" evidence="1">
    <location>
        <begin position="384"/>
        <end position="385"/>
    </location>
    <ligand>
        <name>acetyl-CoA</name>
        <dbReference type="ChEBI" id="CHEBI:57288"/>
    </ligand>
</feature>
<feature type="binding site" evidence="1">
    <location>
        <position position="403"/>
    </location>
    <ligand>
        <name>acetyl-CoA</name>
        <dbReference type="ChEBI" id="CHEBI:57288"/>
    </ligand>
</feature>
<feature type="binding site" evidence="1">
    <location>
        <position position="421"/>
    </location>
    <ligand>
        <name>acetyl-CoA</name>
        <dbReference type="ChEBI" id="CHEBI:57288"/>
    </ligand>
</feature>
<feature type="binding site" evidence="1">
    <location>
        <position position="438"/>
    </location>
    <ligand>
        <name>acetyl-CoA</name>
        <dbReference type="ChEBI" id="CHEBI:57288"/>
    </ligand>
</feature>
<comment type="function">
    <text evidence="1">Catalyzes the last two sequential reactions in the de novo biosynthetic pathway for UDP-N-acetylglucosamine (UDP-GlcNAc). The C-terminal domain catalyzes the transfer of acetyl group from acetyl coenzyme A to glucosamine-1-phosphate (GlcN-1-P) to produce N-acetylglucosamine-1-phosphate (GlcNAc-1-P), which is converted into UDP-GlcNAc by the transfer of uridine 5-monophosphate (from uridine 5-triphosphate), a reaction catalyzed by the N-terminal domain.</text>
</comment>
<comment type="catalytic activity">
    <reaction evidence="1">
        <text>alpha-D-glucosamine 1-phosphate + acetyl-CoA = N-acetyl-alpha-D-glucosamine 1-phosphate + CoA + H(+)</text>
        <dbReference type="Rhea" id="RHEA:13725"/>
        <dbReference type="ChEBI" id="CHEBI:15378"/>
        <dbReference type="ChEBI" id="CHEBI:57287"/>
        <dbReference type="ChEBI" id="CHEBI:57288"/>
        <dbReference type="ChEBI" id="CHEBI:57776"/>
        <dbReference type="ChEBI" id="CHEBI:58516"/>
        <dbReference type="EC" id="2.3.1.157"/>
    </reaction>
</comment>
<comment type="catalytic activity">
    <reaction evidence="1">
        <text>N-acetyl-alpha-D-glucosamine 1-phosphate + UTP + H(+) = UDP-N-acetyl-alpha-D-glucosamine + diphosphate</text>
        <dbReference type="Rhea" id="RHEA:13509"/>
        <dbReference type="ChEBI" id="CHEBI:15378"/>
        <dbReference type="ChEBI" id="CHEBI:33019"/>
        <dbReference type="ChEBI" id="CHEBI:46398"/>
        <dbReference type="ChEBI" id="CHEBI:57705"/>
        <dbReference type="ChEBI" id="CHEBI:57776"/>
        <dbReference type="EC" id="2.7.7.23"/>
    </reaction>
</comment>
<comment type="cofactor">
    <cofactor evidence="1">
        <name>Mg(2+)</name>
        <dbReference type="ChEBI" id="CHEBI:18420"/>
    </cofactor>
    <text evidence="1">Binds 1 Mg(2+) ion per subunit.</text>
</comment>
<comment type="pathway">
    <text evidence="1">Nucleotide-sugar biosynthesis; UDP-N-acetyl-alpha-D-glucosamine biosynthesis; N-acetyl-alpha-D-glucosamine 1-phosphate from alpha-D-glucosamine 6-phosphate (route II): step 2/2.</text>
</comment>
<comment type="pathway">
    <text evidence="1">Nucleotide-sugar biosynthesis; UDP-N-acetyl-alpha-D-glucosamine biosynthesis; UDP-N-acetyl-alpha-D-glucosamine from N-acetyl-alpha-D-glucosamine 1-phosphate: step 1/1.</text>
</comment>
<comment type="pathway">
    <text evidence="1">Bacterial outer membrane biogenesis; LPS lipid A biosynthesis.</text>
</comment>
<comment type="subunit">
    <text evidence="1">Homotrimer.</text>
</comment>
<comment type="subcellular location">
    <subcellularLocation>
        <location evidence="1">Cytoplasm</location>
    </subcellularLocation>
</comment>
<comment type="similarity">
    <text evidence="1">In the N-terminal section; belongs to the N-acetylglucosamine-1-phosphate uridyltransferase family.</text>
</comment>
<comment type="similarity">
    <text evidence="1">In the C-terminal section; belongs to the transferase hexapeptide repeat family.</text>
</comment>
<reference key="1">
    <citation type="journal article" date="2003" name="Proc. Natl. Acad. Sci. U.S.A.">
        <title>The complete genome sequence of Chromobacterium violaceum reveals remarkable and exploitable bacterial adaptability.</title>
        <authorList>
            <person name="Vasconcelos A.T.R."/>
            <person name="de Almeida D.F."/>
            <person name="Hungria M."/>
            <person name="Guimaraes C.T."/>
            <person name="Antonio R.V."/>
            <person name="Almeida F.C."/>
            <person name="de Almeida L.G.P."/>
            <person name="de Almeida R."/>
            <person name="Alves-Gomes J.A."/>
            <person name="Andrade E.M."/>
            <person name="Araripe J."/>
            <person name="de Araujo M.F.F."/>
            <person name="Astolfi-Filho S."/>
            <person name="Azevedo V."/>
            <person name="Baptista A.J."/>
            <person name="Bataus L.A.M."/>
            <person name="Batista J.S."/>
            <person name="Belo A."/>
            <person name="van den Berg C."/>
            <person name="Bogo M."/>
            <person name="Bonatto S."/>
            <person name="Bordignon J."/>
            <person name="Brigido M.M."/>
            <person name="Brito C.A."/>
            <person name="Brocchi M."/>
            <person name="Burity H.A."/>
            <person name="Camargo A.A."/>
            <person name="Cardoso D.D.P."/>
            <person name="Carneiro N.P."/>
            <person name="Carraro D.M."/>
            <person name="Carvalho C.M.B."/>
            <person name="Cascardo J.C.M."/>
            <person name="Cavada B.S."/>
            <person name="Chueire L.M.O."/>
            <person name="Creczynski-Pasa T.B."/>
            <person name="Cunha-Junior N.C."/>
            <person name="Fagundes N."/>
            <person name="Falcao C.L."/>
            <person name="Fantinatti F."/>
            <person name="Farias I.P."/>
            <person name="Felipe M.S.S."/>
            <person name="Ferrari L.P."/>
            <person name="Ferro J.A."/>
            <person name="Ferro M.I.T."/>
            <person name="Franco G.R."/>
            <person name="Freitas N.S.A."/>
            <person name="Furlan L.R."/>
            <person name="Gazzinelli R.T."/>
            <person name="Gomes E.A."/>
            <person name="Goncalves P.R."/>
            <person name="Grangeiro T.B."/>
            <person name="Grattapaglia D."/>
            <person name="Grisard E.C."/>
            <person name="Hanna E.S."/>
            <person name="Jardim S.N."/>
            <person name="Laurino J."/>
            <person name="Leoi L.C.T."/>
            <person name="Lima L.F.A."/>
            <person name="Loureiro M.F."/>
            <person name="Lyra M.C.C.P."/>
            <person name="Madeira H.M.F."/>
            <person name="Manfio G.P."/>
            <person name="Maranhao A.Q."/>
            <person name="Martins W.S."/>
            <person name="di Mauro S.M.Z."/>
            <person name="de Medeiros S.R.B."/>
            <person name="Meissner R.V."/>
            <person name="Moreira M.A.M."/>
            <person name="Nascimento F.F."/>
            <person name="Nicolas M.F."/>
            <person name="Oliveira J.G."/>
            <person name="Oliveira S.C."/>
            <person name="Paixao R.F.C."/>
            <person name="Parente J.A."/>
            <person name="Pedrosa F.O."/>
            <person name="Pena S.D.J."/>
            <person name="Pereira J.O."/>
            <person name="Pereira M."/>
            <person name="Pinto L.S.R.C."/>
            <person name="Pinto L.S."/>
            <person name="Porto J.I.R."/>
            <person name="Potrich D.P."/>
            <person name="Ramalho-Neto C.E."/>
            <person name="Reis A.M.M."/>
            <person name="Rigo L.U."/>
            <person name="Rondinelli E."/>
            <person name="Santos E.B.P."/>
            <person name="Santos F.R."/>
            <person name="Schneider M.P.C."/>
            <person name="Seuanez H.N."/>
            <person name="Silva A.M.R."/>
            <person name="da Silva A.L.C."/>
            <person name="Silva D.W."/>
            <person name="Silva R."/>
            <person name="Simoes I.C."/>
            <person name="Simon D."/>
            <person name="Soares C.M.A."/>
            <person name="Soares R.B.A."/>
            <person name="Souza E.M."/>
            <person name="Souza K.R.L."/>
            <person name="Souza R.C."/>
            <person name="Steffens M.B.R."/>
            <person name="Steindel M."/>
            <person name="Teixeira S.R."/>
            <person name="Urmenyi T."/>
            <person name="Vettore A."/>
            <person name="Wassem R."/>
            <person name="Zaha A."/>
            <person name="Simpson A.J.G."/>
        </authorList>
    </citation>
    <scope>NUCLEOTIDE SEQUENCE [LARGE SCALE GENOMIC DNA]</scope>
    <source>
        <strain>ATCC 12472 / DSM 30191 / JCM 1249 / CCUG 213 / NBRC 12614 / NCIMB 9131 / NCTC 9757 / MK</strain>
    </source>
</reference>
<name>GLMU_CHRVO</name>
<proteinExistence type="inferred from homology"/>
<organism>
    <name type="scientific">Chromobacterium violaceum (strain ATCC 12472 / DSM 30191 / JCM 1249 / CCUG 213 / NBRC 12614 / NCIMB 9131 / NCTC 9757 / MK)</name>
    <dbReference type="NCBI Taxonomy" id="243365"/>
    <lineage>
        <taxon>Bacteria</taxon>
        <taxon>Pseudomonadati</taxon>
        <taxon>Pseudomonadota</taxon>
        <taxon>Betaproteobacteria</taxon>
        <taxon>Neisseriales</taxon>
        <taxon>Chromobacteriaceae</taxon>
        <taxon>Chromobacterium</taxon>
    </lineage>
</organism>